<reference key="1">
    <citation type="journal article" date="2005" name="Nucleic Acids Res.">
        <title>Genome dynamics and diversity of Shigella species, the etiologic agents of bacillary dysentery.</title>
        <authorList>
            <person name="Yang F."/>
            <person name="Yang J."/>
            <person name="Zhang X."/>
            <person name="Chen L."/>
            <person name="Jiang Y."/>
            <person name="Yan Y."/>
            <person name="Tang X."/>
            <person name="Wang J."/>
            <person name="Xiong Z."/>
            <person name="Dong J."/>
            <person name="Xue Y."/>
            <person name="Zhu Y."/>
            <person name="Xu X."/>
            <person name="Sun L."/>
            <person name="Chen S."/>
            <person name="Nie H."/>
            <person name="Peng J."/>
            <person name="Xu J."/>
            <person name="Wang Y."/>
            <person name="Yuan Z."/>
            <person name="Wen Y."/>
            <person name="Yao Z."/>
            <person name="Shen Y."/>
            <person name="Qiang B."/>
            <person name="Hou Y."/>
            <person name="Yu J."/>
            <person name="Jin Q."/>
        </authorList>
    </citation>
    <scope>NUCLEOTIDE SEQUENCE [LARGE SCALE GENOMIC DNA]</scope>
    <source>
        <strain>Ss046</strain>
    </source>
</reference>
<evidence type="ECO:0000250" key="1"/>
<evidence type="ECO:0000255" key="2">
    <source>
        <dbReference type="HAMAP-Rule" id="MF_01441"/>
    </source>
</evidence>
<accession>Q3Z3X3</accession>
<gene>
    <name evidence="2" type="primary">dps</name>
    <name type="ordered locus">SSON_0792</name>
</gene>
<protein>
    <recommendedName>
        <fullName evidence="2">DNA protection during starvation protein</fullName>
        <ecNumber evidence="2">1.16.-.-</ecNumber>
    </recommendedName>
</protein>
<sequence>MSTAKLVKSKATNLLYTRNDVSDSEKKATVELLNRQVIQFIDLSLITKQAHWNMRGANFIAVHEMLDGFRTALIDHLDTMAERAVQLGGVALGTTQVINSKTPLKSYPLDIHNVQDHLKELADRYAIVANDVRKAIGEAKDDDTADILTAASRDLDKFLWFIESNIE</sequence>
<dbReference type="EC" id="1.16.-.-" evidence="2"/>
<dbReference type="EMBL" id="CP000038">
    <property type="protein sequence ID" value="AAZ87539.1"/>
    <property type="molecule type" value="Genomic_DNA"/>
</dbReference>
<dbReference type="RefSeq" id="WP_000100800.1">
    <property type="nucleotide sequence ID" value="NC_007384.1"/>
</dbReference>
<dbReference type="SMR" id="Q3Z3X3"/>
<dbReference type="GeneID" id="93776616"/>
<dbReference type="KEGG" id="ssn:SSON_0792"/>
<dbReference type="HOGENOM" id="CLU_098183_1_2_6"/>
<dbReference type="Proteomes" id="UP000002529">
    <property type="component" value="Chromosome"/>
</dbReference>
<dbReference type="GO" id="GO:0005737">
    <property type="term" value="C:cytoplasm"/>
    <property type="evidence" value="ECO:0007669"/>
    <property type="project" value="UniProtKB-UniRule"/>
</dbReference>
<dbReference type="GO" id="GO:0009295">
    <property type="term" value="C:nucleoid"/>
    <property type="evidence" value="ECO:0007669"/>
    <property type="project" value="UniProtKB-SubCell"/>
</dbReference>
<dbReference type="GO" id="GO:0003677">
    <property type="term" value="F:DNA binding"/>
    <property type="evidence" value="ECO:0007669"/>
    <property type="project" value="UniProtKB-UniRule"/>
</dbReference>
<dbReference type="GO" id="GO:0008199">
    <property type="term" value="F:ferric iron binding"/>
    <property type="evidence" value="ECO:0007669"/>
    <property type="project" value="UniProtKB-UniRule"/>
</dbReference>
<dbReference type="GO" id="GO:0016722">
    <property type="term" value="F:oxidoreductase activity, acting on metal ions"/>
    <property type="evidence" value="ECO:0007669"/>
    <property type="project" value="InterPro"/>
</dbReference>
<dbReference type="GO" id="GO:0030261">
    <property type="term" value="P:chromosome condensation"/>
    <property type="evidence" value="ECO:0007669"/>
    <property type="project" value="UniProtKB-KW"/>
</dbReference>
<dbReference type="GO" id="GO:0006879">
    <property type="term" value="P:intracellular iron ion homeostasis"/>
    <property type="evidence" value="ECO:0007669"/>
    <property type="project" value="UniProtKB-KW"/>
</dbReference>
<dbReference type="CDD" id="cd01043">
    <property type="entry name" value="DPS"/>
    <property type="match status" value="1"/>
</dbReference>
<dbReference type="FunFam" id="1.20.1260.10:FF:000003">
    <property type="entry name" value="DNA protection during starvation protein"/>
    <property type="match status" value="1"/>
</dbReference>
<dbReference type="Gene3D" id="1.20.1260.10">
    <property type="match status" value="1"/>
</dbReference>
<dbReference type="HAMAP" id="MF_01441">
    <property type="entry name" value="Dps"/>
    <property type="match status" value="1"/>
</dbReference>
<dbReference type="InterPro" id="IPR002177">
    <property type="entry name" value="DPS_DNA-bd"/>
</dbReference>
<dbReference type="InterPro" id="IPR023188">
    <property type="entry name" value="DPS_DNA-bd_CS"/>
</dbReference>
<dbReference type="InterPro" id="IPR023067">
    <property type="entry name" value="Dps_gammaproteobac"/>
</dbReference>
<dbReference type="InterPro" id="IPR012347">
    <property type="entry name" value="Ferritin-like"/>
</dbReference>
<dbReference type="InterPro" id="IPR009078">
    <property type="entry name" value="Ferritin-like_SF"/>
</dbReference>
<dbReference type="InterPro" id="IPR008331">
    <property type="entry name" value="Ferritin_DPS_dom"/>
</dbReference>
<dbReference type="NCBIfam" id="NF006975">
    <property type="entry name" value="PRK09448.1"/>
    <property type="match status" value="1"/>
</dbReference>
<dbReference type="PANTHER" id="PTHR42932:SF3">
    <property type="entry name" value="DNA PROTECTION DURING STARVATION PROTEIN"/>
    <property type="match status" value="1"/>
</dbReference>
<dbReference type="PANTHER" id="PTHR42932">
    <property type="entry name" value="GENERAL STRESS PROTEIN 20U"/>
    <property type="match status" value="1"/>
</dbReference>
<dbReference type="Pfam" id="PF00210">
    <property type="entry name" value="Ferritin"/>
    <property type="match status" value="1"/>
</dbReference>
<dbReference type="PIRSF" id="PIRSF005900">
    <property type="entry name" value="Dps"/>
    <property type="match status" value="1"/>
</dbReference>
<dbReference type="PRINTS" id="PR01346">
    <property type="entry name" value="HELNAPAPROT"/>
</dbReference>
<dbReference type="SUPFAM" id="SSF47240">
    <property type="entry name" value="Ferritin-like"/>
    <property type="match status" value="1"/>
</dbReference>
<dbReference type="PROSITE" id="PS00818">
    <property type="entry name" value="DPS_1"/>
    <property type="match status" value="1"/>
</dbReference>
<dbReference type="PROSITE" id="PS00819">
    <property type="entry name" value="DPS_2"/>
    <property type="match status" value="1"/>
</dbReference>
<keyword id="KW-0963">Cytoplasm</keyword>
<keyword id="KW-0226">DNA condensation</keyword>
<keyword id="KW-0238">DNA-binding</keyword>
<keyword id="KW-0408">Iron</keyword>
<keyword id="KW-0409">Iron storage</keyword>
<keyword id="KW-0479">Metal-binding</keyword>
<keyword id="KW-0560">Oxidoreductase</keyword>
<keyword id="KW-1185">Reference proteome</keyword>
<feature type="initiator methionine" description="Removed" evidence="1">
    <location>
        <position position="1"/>
    </location>
</feature>
<feature type="chain" id="PRO_0000271596" description="DNA protection during starvation protein">
    <location>
        <begin position="2"/>
        <end position="167"/>
    </location>
</feature>
<feature type="binding site" evidence="2">
    <location>
        <position position="51"/>
    </location>
    <ligand>
        <name>Fe cation</name>
        <dbReference type="ChEBI" id="CHEBI:24875"/>
        <label>1</label>
        <note>ligand shared between two dodecameric partners</note>
    </ligand>
</feature>
<feature type="binding site" description="in other chain" evidence="2">
    <location>
        <position position="78"/>
    </location>
    <ligand>
        <name>Fe cation</name>
        <dbReference type="ChEBI" id="CHEBI:24875"/>
        <label>1</label>
        <note>ligand shared between two dodecameric partners</note>
    </ligand>
</feature>
<feature type="binding site" description="in other chain" evidence="2">
    <location>
        <position position="82"/>
    </location>
    <ligand>
        <name>Fe cation</name>
        <dbReference type="ChEBI" id="CHEBI:24875"/>
        <label>1</label>
        <note>ligand shared between two dodecameric partners</note>
    </ligand>
</feature>
<feature type="binding site" evidence="2">
    <location>
        <position position="82"/>
    </location>
    <ligand>
        <name>Fe cation</name>
        <dbReference type="ChEBI" id="CHEBI:24875"/>
        <label>2</label>
    </ligand>
</feature>
<comment type="function">
    <text evidence="2">During stationary phase, binds the chromosome non-specifically, forming a highly ordered and stable dps-DNA co-crystal within which chromosomal DNA is condensed and protected from diverse damages. It protects DNA from oxidative damage by sequestering intracellular Fe(2+) ion and storing it in the form of Fe(3+) oxyhydroxide mineral, which can be released after reduction. One hydrogen peroxide oxidizes two Fe(2+) ions, which prevents hydroxyl radical production by the Fenton reaction. Dps also protects the cell from UV and gamma irradiation, iron and copper toxicity, thermal stress and acid and base shocks. Also shows a weak catalase activity.</text>
</comment>
<comment type="catalytic activity">
    <reaction evidence="2">
        <text>2 Fe(2+) + H2O2 + 2 H(+) = 2 Fe(3+) + 2 H2O</text>
        <dbReference type="Rhea" id="RHEA:48712"/>
        <dbReference type="ChEBI" id="CHEBI:15377"/>
        <dbReference type="ChEBI" id="CHEBI:15378"/>
        <dbReference type="ChEBI" id="CHEBI:16240"/>
        <dbReference type="ChEBI" id="CHEBI:29033"/>
        <dbReference type="ChEBI" id="CHEBI:29034"/>
    </reaction>
</comment>
<comment type="subunit">
    <text evidence="2">Homododecamer. The 12 subunits form a hollow sphere into which the mineral iron core of up to 500 Fe(3+) can be deposited.</text>
</comment>
<comment type="subcellular location">
    <subcellularLocation>
        <location evidence="2">Cytoplasm</location>
        <location evidence="2">Nucleoid</location>
    </subcellularLocation>
</comment>
<comment type="similarity">
    <text evidence="2">Belongs to the Dps family.</text>
</comment>
<organism>
    <name type="scientific">Shigella sonnei (strain Ss046)</name>
    <dbReference type="NCBI Taxonomy" id="300269"/>
    <lineage>
        <taxon>Bacteria</taxon>
        <taxon>Pseudomonadati</taxon>
        <taxon>Pseudomonadota</taxon>
        <taxon>Gammaproteobacteria</taxon>
        <taxon>Enterobacterales</taxon>
        <taxon>Enterobacteriaceae</taxon>
        <taxon>Shigella</taxon>
    </lineage>
</organism>
<name>DPS_SHISS</name>
<proteinExistence type="inferred from homology"/>